<proteinExistence type="inferred from homology"/>
<accession>A3CMS0</accession>
<reference key="1">
    <citation type="journal article" date="2007" name="J. Bacteriol.">
        <title>Genome of the opportunistic pathogen Streptococcus sanguinis.</title>
        <authorList>
            <person name="Xu P."/>
            <person name="Alves J.M."/>
            <person name="Kitten T."/>
            <person name="Brown A."/>
            <person name="Chen Z."/>
            <person name="Ozaki L.S."/>
            <person name="Manque P."/>
            <person name="Ge X."/>
            <person name="Serrano M.G."/>
            <person name="Puiu D."/>
            <person name="Hendricks S."/>
            <person name="Wang Y."/>
            <person name="Chaplin M.D."/>
            <person name="Akan D."/>
            <person name="Paik S."/>
            <person name="Peterson D.L."/>
            <person name="Macrina F.L."/>
            <person name="Buck G.A."/>
        </authorList>
    </citation>
    <scope>NUCLEOTIDE SEQUENCE [LARGE SCALE GENOMIC DNA]</scope>
    <source>
        <strain>SK36</strain>
    </source>
</reference>
<sequence>MSTYAIIKTGGKQVKVEVGQAIYVEKLNAEAGQDVTFDEVVLVGGENTVVGTPLVAGASVVGTVEKQGKQKKVVTYKYKPKKGSHRKQGHRQPYTKVVINAINA</sequence>
<keyword id="KW-1185">Reference proteome</keyword>
<keyword id="KW-0687">Ribonucleoprotein</keyword>
<keyword id="KW-0689">Ribosomal protein</keyword>
<keyword id="KW-0694">RNA-binding</keyword>
<keyword id="KW-0699">rRNA-binding</keyword>
<name>RL21_STRSV</name>
<evidence type="ECO:0000255" key="1">
    <source>
        <dbReference type="HAMAP-Rule" id="MF_01363"/>
    </source>
</evidence>
<evidence type="ECO:0000305" key="2"/>
<dbReference type="EMBL" id="CP000387">
    <property type="protein sequence ID" value="ABN44475.1"/>
    <property type="molecule type" value="Genomic_DNA"/>
</dbReference>
<dbReference type="RefSeq" id="WP_002904398.1">
    <property type="nucleotide sequence ID" value="NC_009009.1"/>
</dbReference>
<dbReference type="RefSeq" id="YP_001035025.1">
    <property type="nucleotide sequence ID" value="NC_009009.1"/>
</dbReference>
<dbReference type="SMR" id="A3CMS0"/>
<dbReference type="STRING" id="388919.SSA_1061"/>
<dbReference type="KEGG" id="ssa:SSA_1061"/>
<dbReference type="PATRIC" id="fig|388919.9.peg.1007"/>
<dbReference type="eggNOG" id="COG0261">
    <property type="taxonomic scope" value="Bacteria"/>
</dbReference>
<dbReference type="HOGENOM" id="CLU_061463_3_1_9"/>
<dbReference type="OrthoDB" id="9813334at2"/>
<dbReference type="Proteomes" id="UP000002148">
    <property type="component" value="Chromosome"/>
</dbReference>
<dbReference type="GO" id="GO:0005737">
    <property type="term" value="C:cytoplasm"/>
    <property type="evidence" value="ECO:0007669"/>
    <property type="project" value="UniProtKB-ARBA"/>
</dbReference>
<dbReference type="GO" id="GO:1990904">
    <property type="term" value="C:ribonucleoprotein complex"/>
    <property type="evidence" value="ECO:0007669"/>
    <property type="project" value="UniProtKB-KW"/>
</dbReference>
<dbReference type="GO" id="GO:0005840">
    <property type="term" value="C:ribosome"/>
    <property type="evidence" value="ECO:0007669"/>
    <property type="project" value="UniProtKB-KW"/>
</dbReference>
<dbReference type="GO" id="GO:0019843">
    <property type="term" value="F:rRNA binding"/>
    <property type="evidence" value="ECO:0007669"/>
    <property type="project" value="UniProtKB-UniRule"/>
</dbReference>
<dbReference type="GO" id="GO:0003735">
    <property type="term" value="F:structural constituent of ribosome"/>
    <property type="evidence" value="ECO:0007669"/>
    <property type="project" value="InterPro"/>
</dbReference>
<dbReference type="GO" id="GO:0006412">
    <property type="term" value="P:translation"/>
    <property type="evidence" value="ECO:0007669"/>
    <property type="project" value="UniProtKB-UniRule"/>
</dbReference>
<dbReference type="HAMAP" id="MF_01363">
    <property type="entry name" value="Ribosomal_bL21"/>
    <property type="match status" value="1"/>
</dbReference>
<dbReference type="InterPro" id="IPR028909">
    <property type="entry name" value="bL21-like"/>
</dbReference>
<dbReference type="InterPro" id="IPR036164">
    <property type="entry name" value="bL21-like_sf"/>
</dbReference>
<dbReference type="InterPro" id="IPR001787">
    <property type="entry name" value="Ribosomal_bL21"/>
</dbReference>
<dbReference type="InterPro" id="IPR018258">
    <property type="entry name" value="Ribosomal_bL21_CS"/>
</dbReference>
<dbReference type="NCBIfam" id="TIGR00061">
    <property type="entry name" value="L21"/>
    <property type="match status" value="1"/>
</dbReference>
<dbReference type="PANTHER" id="PTHR21349">
    <property type="entry name" value="50S RIBOSOMAL PROTEIN L21"/>
    <property type="match status" value="1"/>
</dbReference>
<dbReference type="PANTHER" id="PTHR21349:SF0">
    <property type="entry name" value="LARGE RIBOSOMAL SUBUNIT PROTEIN BL21M"/>
    <property type="match status" value="1"/>
</dbReference>
<dbReference type="Pfam" id="PF00829">
    <property type="entry name" value="Ribosomal_L21p"/>
    <property type="match status" value="1"/>
</dbReference>
<dbReference type="SUPFAM" id="SSF141091">
    <property type="entry name" value="L21p-like"/>
    <property type="match status" value="1"/>
</dbReference>
<dbReference type="PROSITE" id="PS01169">
    <property type="entry name" value="RIBOSOMAL_L21"/>
    <property type="match status" value="1"/>
</dbReference>
<comment type="function">
    <text evidence="1">This protein binds to 23S rRNA in the presence of protein L20.</text>
</comment>
<comment type="subunit">
    <text evidence="1">Part of the 50S ribosomal subunit. Contacts protein L20.</text>
</comment>
<comment type="similarity">
    <text evidence="1">Belongs to the bacterial ribosomal protein bL21 family.</text>
</comment>
<gene>
    <name evidence="1" type="primary">rplU</name>
    <name type="ordered locus">SSA_1061</name>
</gene>
<feature type="chain" id="PRO_1000067907" description="Large ribosomal subunit protein bL21">
    <location>
        <begin position="1"/>
        <end position="104"/>
    </location>
</feature>
<organism>
    <name type="scientific">Streptococcus sanguinis (strain SK36)</name>
    <dbReference type="NCBI Taxonomy" id="388919"/>
    <lineage>
        <taxon>Bacteria</taxon>
        <taxon>Bacillati</taxon>
        <taxon>Bacillota</taxon>
        <taxon>Bacilli</taxon>
        <taxon>Lactobacillales</taxon>
        <taxon>Streptococcaceae</taxon>
        <taxon>Streptococcus</taxon>
    </lineage>
</organism>
<protein>
    <recommendedName>
        <fullName evidence="1">Large ribosomal subunit protein bL21</fullName>
    </recommendedName>
    <alternativeName>
        <fullName evidence="2">50S ribosomal protein L21</fullName>
    </alternativeName>
</protein>